<sequence>MNVSQDTIYAQASEHISDFQFDNRVAGVFSDMIRRSVPGYTQIINTIGDFADRFVMPNTQIYDLGCSLGAATLSIRRQIQGRQCRIIAVDNSESMVARCQENLNAYVSDTDVDLVCGDIRDIDIQNASLVVLNFTLQFLPPEDRETLIAKIYQGLNPGGILVLSEKIRFEDAPIQTLLEEQHLDFKRANGYSELEISQKRSALENVMKPDTLITHQQRLTSQGFSHFSLWFQCFNFASMVAIK</sequence>
<accession>B8EA69</accession>
<evidence type="ECO:0000255" key="1">
    <source>
        <dbReference type="HAMAP-Rule" id="MF_01589"/>
    </source>
</evidence>
<feature type="chain" id="PRO_1000185688" description="Carboxy-S-adenosyl-L-methionine synthase">
    <location>
        <begin position="1"/>
        <end position="243"/>
    </location>
</feature>
<feature type="binding site" evidence="1">
    <location>
        <position position="40"/>
    </location>
    <ligand>
        <name>S-adenosyl-L-methionine</name>
        <dbReference type="ChEBI" id="CHEBI:59789"/>
    </ligand>
</feature>
<feature type="binding site" evidence="1">
    <location>
        <begin position="65"/>
        <end position="67"/>
    </location>
    <ligand>
        <name>S-adenosyl-L-methionine</name>
        <dbReference type="ChEBI" id="CHEBI:59789"/>
    </ligand>
</feature>
<feature type="binding site" evidence="1">
    <location>
        <begin position="90"/>
        <end position="91"/>
    </location>
    <ligand>
        <name>S-adenosyl-L-methionine</name>
        <dbReference type="ChEBI" id="CHEBI:59789"/>
    </ligand>
</feature>
<feature type="binding site" evidence="1">
    <location>
        <begin position="118"/>
        <end position="119"/>
    </location>
    <ligand>
        <name>S-adenosyl-L-methionine</name>
        <dbReference type="ChEBI" id="CHEBI:59789"/>
    </ligand>
</feature>
<feature type="binding site" evidence="1">
    <location>
        <position position="133"/>
    </location>
    <ligand>
        <name>S-adenosyl-L-methionine</name>
        <dbReference type="ChEBI" id="CHEBI:59789"/>
    </ligand>
</feature>
<feature type="binding site" evidence="1">
    <location>
        <position position="200"/>
    </location>
    <ligand>
        <name>S-adenosyl-L-methionine</name>
        <dbReference type="ChEBI" id="CHEBI:59789"/>
    </ligand>
</feature>
<proteinExistence type="inferred from homology"/>
<gene>
    <name evidence="1" type="primary">cmoA</name>
    <name type="ordered locus">Sbal223_2038</name>
</gene>
<comment type="function">
    <text evidence="1">Catalyzes the conversion of S-adenosyl-L-methionine (SAM) to carboxy-S-adenosyl-L-methionine (Cx-SAM).</text>
</comment>
<comment type="catalytic activity">
    <reaction evidence="1">
        <text>prephenate + S-adenosyl-L-methionine = carboxy-S-adenosyl-L-methionine + 3-phenylpyruvate + H2O</text>
        <dbReference type="Rhea" id="RHEA:51692"/>
        <dbReference type="ChEBI" id="CHEBI:15377"/>
        <dbReference type="ChEBI" id="CHEBI:18005"/>
        <dbReference type="ChEBI" id="CHEBI:29934"/>
        <dbReference type="ChEBI" id="CHEBI:59789"/>
        <dbReference type="ChEBI" id="CHEBI:134278"/>
    </reaction>
</comment>
<comment type="subunit">
    <text evidence="1">Homodimer.</text>
</comment>
<comment type="similarity">
    <text evidence="1">Belongs to the class I-like SAM-binding methyltransferase superfamily. Cx-SAM synthase family.</text>
</comment>
<reference key="1">
    <citation type="submission" date="2008-12" db="EMBL/GenBank/DDBJ databases">
        <title>Complete sequence of chromosome of Shewanella baltica OS223.</title>
        <authorList>
            <consortium name="US DOE Joint Genome Institute"/>
            <person name="Lucas S."/>
            <person name="Copeland A."/>
            <person name="Lapidus A."/>
            <person name="Glavina del Rio T."/>
            <person name="Dalin E."/>
            <person name="Tice H."/>
            <person name="Bruce D."/>
            <person name="Goodwin L."/>
            <person name="Pitluck S."/>
            <person name="Chertkov O."/>
            <person name="Meincke L."/>
            <person name="Brettin T."/>
            <person name="Detter J.C."/>
            <person name="Han C."/>
            <person name="Kuske C.R."/>
            <person name="Larimer F."/>
            <person name="Land M."/>
            <person name="Hauser L."/>
            <person name="Kyrpides N."/>
            <person name="Ovchinnikova G."/>
            <person name="Brettar I."/>
            <person name="Rodrigues J."/>
            <person name="Konstantinidis K."/>
            <person name="Tiedje J."/>
        </authorList>
    </citation>
    <scope>NUCLEOTIDE SEQUENCE [LARGE SCALE GENOMIC DNA]</scope>
    <source>
        <strain>OS223</strain>
    </source>
</reference>
<protein>
    <recommendedName>
        <fullName evidence="1">Carboxy-S-adenosyl-L-methionine synthase</fullName>
        <shortName evidence="1">Cx-SAM synthase</shortName>
        <ecNumber evidence="1">2.1.3.-</ecNumber>
    </recommendedName>
</protein>
<dbReference type="EC" id="2.1.3.-" evidence="1"/>
<dbReference type="EMBL" id="CP001252">
    <property type="protein sequence ID" value="ACK46542.1"/>
    <property type="molecule type" value="Genomic_DNA"/>
</dbReference>
<dbReference type="RefSeq" id="WP_012587579.1">
    <property type="nucleotide sequence ID" value="NC_011663.1"/>
</dbReference>
<dbReference type="SMR" id="B8EA69"/>
<dbReference type="KEGG" id="sbp:Sbal223_2038"/>
<dbReference type="HOGENOM" id="CLU_078475_0_0_6"/>
<dbReference type="Proteomes" id="UP000002507">
    <property type="component" value="Chromosome"/>
</dbReference>
<dbReference type="GO" id="GO:0016743">
    <property type="term" value="F:carboxyl- or carbamoyltransferase activity"/>
    <property type="evidence" value="ECO:0007669"/>
    <property type="project" value="UniProtKB-UniRule"/>
</dbReference>
<dbReference type="GO" id="GO:1904047">
    <property type="term" value="F:S-adenosyl-L-methionine binding"/>
    <property type="evidence" value="ECO:0007669"/>
    <property type="project" value="UniProtKB-UniRule"/>
</dbReference>
<dbReference type="GO" id="GO:0002098">
    <property type="term" value="P:tRNA wobble uridine modification"/>
    <property type="evidence" value="ECO:0007669"/>
    <property type="project" value="InterPro"/>
</dbReference>
<dbReference type="CDD" id="cd02440">
    <property type="entry name" value="AdoMet_MTases"/>
    <property type="match status" value="1"/>
</dbReference>
<dbReference type="Gene3D" id="3.40.50.150">
    <property type="entry name" value="Vaccinia Virus protein VP39"/>
    <property type="match status" value="1"/>
</dbReference>
<dbReference type="HAMAP" id="MF_01589">
    <property type="entry name" value="Cx_SAM_synthase"/>
    <property type="match status" value="1"/>
</dbReference>
<dbReference type="InterPro" id="IPR005271">
    <property type="entry name" value="CmoA"/>
</dbReference>
<dbReference type="InterPro" id="IPR041698">
    <property type="entry name" value="Methyltransf_25"/>
</dbReference>
<dbReference type="InterPro" id="IPR029063">
    <property type="entry name" value="SAM-dependent_MTases_sf"/>
</dbReference>
<dbReference type="NCBIfam" id="TIGR00740">
    <property type="entry name" value="carboxy-S-adenosyl-L-methionine synthase CmoA"/>
    <property type="match status" value="1"/>
</dbReference>
<dbReference type="NCBIfam" id="NF011995">
    <property type="entry name" value="PRK15451.1"/>
    <property type="match status" value="1"/>
</dbReference>
<dbReference type="PANTHER" id="PTHR43861:SF2">
    <property type="entry name" value="CARBOXY-S-ADENOSYL-L-METHIONINE SYNTHASE"/>
    <property type="match status" value="1"/>
</dbReference>
<dbReference type="PANTHER" id="PTHR43861">
    <property type="entry name" value="TRANS-ACONITATE 2-METHYLTRANSFERASE-RELATED"/>
    <property type="match status" value="1"/>
</dbReference>
<dbReference type="Pfam" id="PF13649">
    <property type="entry name" value="Methyltransf_25"/>
    <property type="match status" value="1"/>
</dbReference>
<dbReference type="PIRSF" id="PIRSF006325">
    <property type="entry name" value="MeTrfase_bac"/>
    <property type="match status" value="1"/>
</dbReference>
<dbReference type="SUPFAM" id="SSF53335">
    <property type="entry name" value="S-adenosyl-L-methionine-dependent methyltransferases"/>
    <property type="match status" value="1"/>
</dbReference>
<name>CMOA_SHEB2</name>
<keyword id="KW-0949">S-adenosyl-L-methionine</keyword>
<keyword id="KW-0808">Transferase</keyword>
<organism>
    <name type="scientific">Shewanella baltica (strain OS223)</name>
    <dbReference type="NCBI Taxonomy" id="407976"/>
    <lineage>
        <taxon>Bacteria</taxon>
        <taxon>Pseudomonadati</taxon>
        <taxon>Pseudomonadota</taxon>
        <taxon>Gammaproteobacteria</taxon>
        <taxon>Alteromonadales</taxon>
        <taxon>Shewanellaceae</taxon>
        <taxon>Shewanella</taxon>
    </lineage>
</organism>